<sequence>MRILIENVSVFQEGDILNNKNILIENDIIKEISEDKNFEKIDYVIEGKNKIALPGLVNTHTHLAMTLFRGFADDLPLKEWLEEKIWPQEAKLTAEDVYWGSLLGICEMIKGGTIAFADMYFFMDEVAKAVSESGVKASLSVGMIGVSGNENEILNRGVNFAQNWHNAENGRIKVMLAPHAPYTCPPSFLEKVINKAVEMNLSIHTHLSETYLEVENIKNIYGLTPVRLMDRIGLFNVPVLAAHCVFVDDEEIEILSEKGVGVAHNPQSNLKLASGVAPVKKMVEKRVKIGLGTDGPASNNNLDLWEEIRLVATLHKGVEKDPVCIPAKEALNMATKNGMEILGFENSGIIKEGYKADLILVNINKPHFYPRHNLISHLVYSALSSDVDTVIVDGKVLMEKRELKILDEEKIMFEAEKRAFDLIKKR</sequence>
<comment type="function">
    <text evidence="1">Catalyzes the deamination of 5-methylthioadenosine and S-adenosyl-L-homocysteine into 5-methylthioinosine and S-inosyl-L-homocysteine, respectively. Is also able to deaminate adenosine.</text>
</comment>
<comment type="catalytic activity">
    <reaction evidence="1">
        <text>S-adenosyl-L-homocysteine + H2O + H(+) = S-inosyl-L-homocysteine + NH4(+)</text>
        <dbReference type="Rhea" id="RHEA:20716"/>
        <dbReference type="ChEBI" id="CHEBI:15377"/>
        <dbReference type="ChEBI" id="CHEBI:15378"/>
        <dbReference type="ChEBI" id="CHEBI:28938"/>
        <dbReference type="ChEBI" id="CHEBI:57856"/>
        <dbReference type="ChEBI" id="CHEBI:57985"/>
        <dbReference type="EC" id="3.5.4.28"/>
    </reaction>
</comment>
<comment type="catalytic activity">
    <reaction evidence="1">
        <text>S-methyl-5'-thioadenosine + H2O + H(+) = S-methyl-5'-thioinosine + NH4(+)</text>
        <dbReference type="Rhea" id="RHEA:25025"/>
        <dbReference type="ChEBI" id="CHEBI:15377"/>
        <dbReference type="ChEBI" id="CHEBI:15378"/>
        <dbReference type="ChEBI" id="CHEBI:17509"/>
        <dbReference type="ChEBI" id="CHEBI:28938"/>
        <dbReference type="ChEBI" id="CHEBI:48595"/>
        <dbReference type="EC" id="3.5.4.31"/>
    </reaction>
</comment>
<comment type="cofactor">
    <cofactor evidence="1">
        <name>Zn(2+)</name>
        <dbReference type="ChEBI" id="CHEBI:29105"/>
    </cofactor>
    <text evidence="1">Binds 1 zinc ion per subunit.</text>
</comment>
<comment type="similarity">
    <text evidence="1">Belongs to the metallo-dependent hydrolases superfamily. MTA/SAH deaminase family.</text>
</comment>
<dbReference type="EC" id="3.5.4.28" evidence="1"/>
<dbReference type="EC" id="3.5.4.31" evidence="1"/>
<dbReference type="EMBL" id="CP001251">
    <property type="protein sequence ID" value="ACK42211.1"/>
    <property type="molecule type" value="Genomic_DNA"/>
</dbReference>
<dbReference type="RefSeq" id="WP_012583295.1">
    <property type="nucleotide sequence ID" value="NC_011661.1"/>
</dbReference>
<dbReference type="RefSeq" id="YP_002352825.1">
    <property type="nucleotide sequence ID" value="NC_011661.1"/>
</dbReference>
<dbReference type="SMR" id="B8E183"/>
<dbReference type="STRING" id="515635.Dtur_0930"/>
<dbReference type="EnsemblBacteria" id="ACK42211">
    <property type="protein sequence ID" value="ACK42211"/>
    <property type="gene ID" value="Dtur_0930"/>
</dbReference>
<dbReference type="KEGG" id="dtu:Dtur_0930"/>
<dbReference type="PATRIC" id="fig|515635.4.peg.967"/>
<dbReference type="eggNOG" id="COG0402">
    <property type="taxonomic scope" value="Bacteria"/>
</dbReference>
<dbReference type="HOGENOM" id="CLU_012358_2_1_0"/>
<dbReference type="InParanoid" id="B8E183"/>
<dbReference type="OrthoDB" id="9807210at2"/>
<dbReference type="Proteomes" id="UP000007719">
    <property type="component" value="Chromosome"/>
</dbReference>
<dbReference type="GO" id="GO:0090614">
    <property type="term" value="F:5'-methylthioadenosine deaminase activity"/>
    <property type="evidence" value="ECO:0007669"/>
    <property type="project" value="UniProtKB-UniRule"/>
</dbReference>
<dbReference type="GO" id="GO:0046872">
    <property type="term" value="F:metal ion binding"/>
    <property type="evidence" value="ECO:0007669"/>
    <property type="project" value="UniProtKB-KW"/>
</dbReference>
<dbReference type="GO" id="GO:0050270">
    <property type="term" value="F:S-adenosylhomocysteine deaminase activity"/>
    <property type="evidence" value="ECO:0007669"/>
    <property type="project" value="UniProtKB-UniRule"/>
</dbReference>
<dbReference type="CDD" id="cd01298">
    <property type="entry name" value="ATZ_TRZ_like"/>
    <property type="match status" value="1"/>
</dbReference>
<dbReference type="FunFam" id="3.20.20.140:FF:000014">
    <property type="entry name" value="5-methylthioadenosine/S-adenosylhomocysteine deaminase"/>
    <property type="match status" value="1"/>
</dbReference>
<dbReference type="Gene3D" id="3.20.20.140">
    <property type="entry name" value="Metal-dependent hydrolases"/>
    <property type="match status" value="1"/>
</dbReference>
<dbReference type="Gene3D" id="2.30.40.10">
    <property type="entry name" value="Urease, subunit C, domain 1"/>
    <property type="match status" value="1"/>
</dbReference>
<dbReference type="HAMAP" id="MF_01281">
    <property type="entry name" value="MTA_SAH_deamin"/>
    <property type="match status" value="1"/>
</dbReference>
<dbReference type="InterPro" id="IPR006680">
    <property type="entry name" value="Amidohydro-rel"/>
</dbReference>
<dbReference type="InterPro" id="IPR023512">
    <property type="entry name" value="Deaminase_MtaD/DadD"/>
</dbReference>
<dbReference type="InterPro" id="IPR011059">
    <property type="entry name" value="Metal-dep_hydrolase_composite"/>
</dbReference>
<dbReference type="InterPro" id="IPR032466">
    <property type="entry name" value="Metal_Hydrolase"/>
</dbReference>
<dbReference type="InterPro" id="IPR050287">
    <property type="entry name" value="MTA/SAH_deaminase"/>
</dbReference>
<dbReference type="PANTHER" id="PTHR43794:SF11">
    <property type="entry name" value="AMIDOHYDROLASE-RELATED DOMAIN-CONTAINING PROTEIN"/>
    <property type="match status" value="1"/>
</dbReference>
<dbReference type="PANTHER" id="PTHR43794">
    <property type="entry name" value="AMINOHYDROLASE SSNA-RELATED"/>
    <property type="match status" value="1"/>
</dbReference>
<dbReference type="Pfam" id="PF01979">
    <property type="entry name" value="Amidohydro_1"/>
    <property type="match status" value="1"/>
</dbReference>
<dbReference type="SUPFAM" id="SSF51338">
    <property type="entry name" value="Composite domain of metallo-dependent hydrolases"/>
    <property type="match status" value="1"/>
</dbReference>
<dbReference type="SUPFAM" id="SSF51556">
    <property type="entry name" value="Metallo-dependent hydrolases"/>
    <property type="match status" value="1"/>
</dbReference>
<proteinExistence type="inferred from homology"/>
<protein>
    <recommendedName>
        <fullName evidence="1">5-methylthioadenosine/S-adenosylhomocysteine deaminase</fullName>
        <shortName evidence="1">MTA/SAH deaminase</shortName>
        <ecNumber evidence="1">3.5.4.28</ecNumber>
        <ecNumber evidence="1">3.5.4.31</ecNumber>
    </recommendedName>
</protein>
<evidence type="ECO:0000255" key="1">
    <source>
        <dbReference type="HAMAP-Rule" id="MF_01281"/>
    </source>
</evidence>
<keyword id="KW-0378">Hydrolase</keyword>
<keyword id="KW-0479">Metal-binding</keyword>
<keyword id="KW-1185">Reference proteome</keyword>
<keyword id="KW-0862">Zinc</keyword>
<feature type="chain" id="PRO_1000140351" description="5-methylthioadenosine/S-adenosylhomocysteine deaminase">
    <location>
        <begin position="1"/>
        <end position="426"/>
    </location>
</feature>
<feature type="binding site" evidence="1">
    <location>
        <position position="60"/>
    </location>
    <ligand>
        <name>Zn(2+)</name>
        <dbReference type="ChEBI" id="CHEBI:29105"/>
    </ligand>
</feature>
<feature type="binding site" evidence="1">
    <location>
        <position position="62"/>
    </location>
    <ligand>
        <name>Zn(2+)</name>
        <dbReference type="ChEBI" id="CHEBI:29105"/>
    </ligand>
</feature>
<feature type="binding site" evidence="1">
    <location>
        <position position="89"/>
    </location>
    <ligand>
        <name>substrate</name>
    </ligand>
</feature>
<feature type="binding site" evidence="1">
    <location>
        <position position="179"/>
    </location>
    <ligand>
        <name>substrate</name>
    </ligand>
</feature>
<feature type="binding site" evidence="1">
    <location>
        <position position="206"/>
    </location>
    <ligand>
        <name>Zn(2+)</name>
        <dbReference type="ChEBI" id="CHEBI:29105"/>
    </ligand>
</feature>
<feature type="binding site" evidence="1">
    <location>
        <position position="209"/>
    </location>
    <ligand>
        <name>substrate</name>
    </ligand>
</feature>
<feature type="binding site" evidence="1">
    <location>
        <position position="294"/>
    </location>
    <ligand>
        <name>substrate</name>
    </ligand>
</feature>
<feature type="binding site" evidence="1">
    <location>
        <position position="294"/>
    </location>
    <ligand>
        <name>Zn(2+)</name>
        <dbReference type="ChEBI" id="CHEBI:29105"/>
    </ligand>
</feature>
<reference key="1">
    <citation type="journal article" date="2016" name="Front. Microbiol.">
        <title>The complete genome sequence of hyperthermophile Dictyoglomus turgidum DSM 6724 reveals a specialized carbohydrate fermentor.</title>
        <authorList>
            <person name="Brumm P.J."/>
            <person name="Gowda K."/>
            <person name="Robb F.T."/>
            <person name="Mead D.A."/>
        </authorList>
    </citation>
    <scope>NUCLEOTIDE SEQUENCE [LARGE SCALE GENOMIC DNA]</scope>
    <source>
        <strain>DSM 6724 / Z-1310</strain>
    </source>
</reference>
<name>MTAD_DICTD</name>
<accession>B8E183</accession>
<gene>
    <name evidence="1" type="primary">mtaD</name>
    <name type="ordered locus">Dtur_0930</name>
</gene>
<organism>
    <name type="scientific">Dictyoglomus turgidum (strain DSM 6724 / Z-1310)</name>
    <dbReference type="NCBI Taxonomy" id="515635"/>
    <lineage>
        <taxon>Bacteria</taxon>
        <taxon>Pseudomonadati</taxon>
        <taxon>Dictyoglomota</taxon>
        <taxon>Dictyoglomia</taxon>
        <taxon>Dictyoglomales</taxon>
        <taxon>Dictyoglomaceae</taxon>
        <taxon>Dictyoglomus</taxon>
    </lineage>
</organism>